<dbReference type="EMBL" id="AE000782">
    <property type="protein sequence ID" value="AAB90422.1"/>
    <property type="molecule type" value="Genomic_DNA"/>
</dbReference>
<dbReference type="PIR" id="E69353">
    <property type="entry name" value="E69353"/>
</dbReference>
<dbReference type="RefSeq" id="WP_010878332.1">
    <property type="nucleotide sequence ID" value="NC_000917.1"/>
</dbReference>
<dbReference type="SMR" id="O29429"/>
<dbReference type="STRING" id="224325.AF_0829"/>
<dbReference type="PaxDb" id="224325-AF_0829"/>
<dbReference type="EnsemblBacteria" id="AAB90422">
    <property type="protein sequence ID" value="AAB90422"/>
    <property type="gene ID" value="AF_0829"/>
</dbReference>
<dbReference type="GeneID" id="1484048"/>
<dbReference type="KEGG" id="afu:AF_0829"/>
<dbReference type="eggNOG" id="arCOG07523">
    <property type="taxonomic scope" value="Archaea"/>
</dbReference>
<dbReference type="HOGENOM" id="CLU_094508_0_0_2"/>
<dbReference type="OrthoDB" id="50198at2157"/>
<dbReference type="Proteomes" id="UP000002199">
    <property type="component" value="Chromosome"/>
</dbReference>
<dbReference type="InterPro" id="IPR016024">
    <property type="entry name" value="ARM-type_fold"/>
</dbReference>
<dbReference type="InterPro" id="IPR054701">
    <property type="entry name" value="DVU0298-like"/>
</dbReference>
<dbReference type="NCBIfam" id="NF045662">
    <property type="entry name" value="DVU0298_fam"/>
    <property type="match status" value="1"/>
</dbReference>
<dbReference type="SUPFAM" id="SSF48371">
    <property type="entry name" value="ARM repeat"/>
    <property type="match status" value="1"/>
</dbReference>
<name>Y829_ARCFU</name>
<sequence>MNLEELKPSKLITFLYHPDELLRFKAAEVLGRKVKGEGARNFILRLFWHLSDESGAYCIGAPLGIAEIGRNNPEVFEGFKNKYVSLLDDWEVERKYVAYGIGRAAEIVRDAYPNPVEKLREKVEEIGDASFIAYAIFALKVLGDDVSDMIARFRKSEEIVEFYDGSEMVRTKLSDLLVEVAED</sequence>
<proteinExistence type="predicted"/>
<gene>
    <name type="ordered locus">AF_0829</name>
</gene>
<reference key="1">
    <citation type="journal article" date="1997" name="Nature">
        <title>The complete genome sequence of the hyperthermophilic, sulphate-reducing archaeon Archaeoglobus fulgidus.</title>
        <authorList>
            <person name="Klenk H.-P."/>
            <person name="Clayton R.A."/>
            <person name="Tomb J.-F."/>
            <person name="White O."/>
            <person name="Nelson K.E."/>
            <person name="Ketchum K.A."/>
            <person name="Dodson R.J."/>
            <person name="Gwinn M.L."/>
            <person name="Hickey E.K."/>
            <person name="Peterson J.D."/>
            <person name="Richardson D.L."/>
            <person name="Kerlavage A.R."/>
            <person name="Graham D.E."/>
            <person name="Kyrpides N.C."/>
            <person name="Fleischmann R.D."/>
            <person name="Quackenbush J."/>
            <person name="Lee N.H."/>
            <person name="Sutton G.G."/>
            <person name="Gill S.R."/>
            <person name="Kirkness E.F."/>
            <person name="Dougherty B.A."/>
            <person name="McKenney K."/>
            <person name="Adams M.D."/>
            <person name="Loftus B.J."/>
            <person name="Peterson S.N."/>
            <person name="Reich C.I."/>
            <person name="McNeil L.K."/>
            <person name="Badger J.H."/>
            <person name="Glodek A."/>
            <person name="Zhou L."/>
            <person name="Overbeek R."/>
            <person name="Gocayne J.D."/>
            <person name="Weidman J.F."/>
            <person name="McDonald L.A."/>
            <person name="Utterback T.R."/>
            <person name="Cotton M.D."/>
            <person name="Spriggs T."/>
            <person name="Artiach P."/>
            <person name="Kaine B.P."/>
            <person name="Sykes S.M."/>
            <person name="Sadow P.W."/>
            <person name="D'Andrea K.P."/>
            <person name="Bowman C."/>
            <person name="Fujii C."/>
            <person name="Garland S.A."/>
            <person name="Mason T.M."/>
            <person name="Olsen G.J."/>
            <person name="Fraser C.M."/>
            <person name="Smith H.O."/>
            <person name="Woese C.R."/>
            <person name="Venter J.C."/>
        </authorList>
    </citation>
    <scope>NUCLEOTIDE SEQUENCE [LARGE SCALE GENOMIC DNA]</scope>
    <source>
        <strain>ATCC 49558 / DSM 4304 / JCM 9628 / NBRC 100126 / VC-16</strain>
    </source>
</reference>
<protein>
    <recommendedName>
        <fullName>Uncharacterized protein AF_0829</fullName>
    </recommendedName>
</protein>
<accession>O29429</accession>
<feature type="chain" id="PRO_0000127929" description="Uncharacterized protein AF_0829">
    <location>
        <begin position="1"/>
        <end position="183"/>
    </location>
</feature>
<keyword id="KW-1185">Reference proteome</keyword>
<organism>
    <name type="scientific">Archaeoglobus fulgidus (strain ATCC 49558 / DSM 4304 / JCM 9628 / NBRC 100126 / VC-16)</name>
    <dbReference type="NCBI Taxonomy" id="224325"/>
    <lineage>
        <taxon>Archaea</taxon>
        <taxon>Methanobacteriati</taxon>
        <taxon>Methanobacteriota</taxon>
        <taxon>Archaeoglobi</taxon>
        <taxon>Archaeoglobales</taxon>
        <taxon>Archaeoglobaceae</taxon>
        <taxon>Archaeoglobus</taxon>
    </lineage>
</organism>